<gene>
    <name type="primary">licB</name>
    <name type="ordered locus">HI_1538</name>
</gene>
<accession>P14182</accession>
<accession>O05075</accession>
<accession>Q57357</accession>
<evidence type="ECO:0000305" key="1"/>
<proteinExistence type="predicted"/>
<keyword id="KW-1185">Reference proteome</keyword>
<keyword id="KW-0677">Repeat</keyword>
<sequence length="292" mass="32449">MRGYLFGILSAVFWALSGLLYNELPLSEYTALGKVISLLFLIDFCSLLVIGITLWRKSAVDFQGVFWQPALSGILGGPIGMSAYLLSIHYLTIYYAAPLSSLFPVFAALMSYWILKEKITKTAQFGFALAIISSSLLAIEVGQEITFNTIGFIFLIICILGWSSEIVISSYTMRSLSGLQVYFLRLCGSTIGYLLILFILSLKNFSLDILSFNYVQIAGVIIFGALSYCCYYQAIYLLKPIKAMALNITYSVWAIGLGYLLYKQPIKPITLLLTLLLSAGVIVTLYYKGEQK</sequence>
<reference key="1">
    <citation type="journal article" date="1989" name="Cell">
        <title>The molecular mechanism of phase variation of H. influenzae lipopolysaccharide.</title>
        <authorList>
            <person name="Weiser J.N."/>
            <person name="Love J.M."/>
            <person name="Moxon E.R."/>
        </authorList>
    </citation>
    <scope>NUCLEOTIDE SEQUENCE [GENOMIC DNA]</scope>
    <source>
        <strain>RM 7004 / Serotype B</strain>
    </source>
</reference>
<reference key="2">
    <citation type="journal article" date="1995" name="Science">
        <title>Whole-genome random sequencing and assembly of Haemophilus influenzae Rd.</title>
        <authorList>
            <person name="Fleischmann R.D."/>
            <person name="Adams M.D."/>
            <person name="White O."/>
            <person name="Clayton R.A."/>
            <person name="Kirkness E.F."/>
            <person name="Kerlavage A.R."/>
            <person name="Bult C.J."/>
            <person name="Tomb J.-F."/>
            <person name="Dougherty B.A."/>
            <person name="Merrick J.M."/>
            <person name="McKenney K."/>
            <person name="Sutton G.G."/>
            <person name="FitzHugh W."/>
            <person name="Fields C.A."/>
            <person name="Gocayne J.D."/>
            <person name="Scott J.D."/>
            <person name="Shirley R."/>
            <person name="Liu L.-I."/>
            <person name="Glodek A."/>
            <person name="Kelley J.M."/>
            <person name="Weidman J.F."/>
            <person name="Phillips C.A."/>
            <person name="Spriggs T."/>
            <person name="Hedblom E."/>
            <person name="Cotton M.D."/>
            <person name="Utterback T.R."/>
            <person name="Hanna M.C."/>
            <person name="Nguyen D.T."/>
            <person name="Saudek D.M."/>
            <person name="Brandon R.C."/>
            <person name="Fine L.D."/>
            <person name="Fritchman J.L."/>
            <person name="Fuhrmann J.L."/>
            <person name="Geoghagen N.S.M."/>
            <person name="Gnehm C.L."/>
            <person name="McDonald L.A."/>
            <person name="Small K.V."/>
            <person name="Fraser C.M."/>
            <person name="Smith H.O."/>
            <person name="Venter J.C."/>
        </authorList>
    </citation>
    <scope>NUCLEOTIDE SEQUENCE [LARGE SCALE GENOMIC DNA]</scope>
    <source>
        <strain>ATCC 51907 / DSM 11121 / KW20 / Rd</strain>
    </source>
</reference>
<dbReference type="EMBL" id="M27280">
    <property type="protein sequence ID" value="AAA24972.1"/>
    <property type="molecule type" value="Genomic_DNA"/>
</dbReference>
<dbReference type="EMBL" id="L42023">
    <property type="protein sequence ID" value="AAC23188.1"/>
    <property type="molecule type" value="Genomic_DNA"/>
</dbReference>
<dbReference type="PIR" id="B33465">
    <property type="entry name" value="B33465"/>
</dbReference>
<dbReference type="RefSeq" id="NP_439687.1">
    <property type="nucleotide sequence ID" value="NC_000907.1"/>
</dbReference>
<dbReference type="SMR" id="P14182"/>
<dbReference type="STRING" id="71421.HI_1538"/>
<dbReference type="TCDB" id="2.A.7.18.1">
    <property type="family name" value="the drug/metabolite transporter (dmt) superfamily"/>
</dbReference>
<dbReference type="EnsemblBacteria" id="AAC23188">
    <property type="protein sequence ID" value="AAC23188"/>
    <property type="gene ID" value="HI_1538"/>
</dbReference>
<dbReference type="KEGG" id="hin:HI_1538"/>
<dbReference type="PATRIC" id="fig|71421.8.peg.1609"/>
<dbReference type="eggNOG" id="COG0697">
    <property type="taxonomic scope" value="Bacteria"/>
</dbReference>
<dbReference type="HOGENOM" id="CLU_044169_1_0_6"/>
<dbReference type="OrthoDB" id="5604143at2"/>
<dbReference type="BioCyc" id="HINF71421:G1GJ1-1558-MONOMER"/>
<dbReference type="Proteomes" id="UP000000579">
    <property type="component" value="Chromosome"/>
</dbReference>
<dbReference type="GO" id="GO:0016020">
    <property type="term" value="C:membrane"/>
    <property type="evidence" value="ECO:0000318"/>
    <property type="project" value="GO_Central"/>
</dbReference>
<dbReference type="Gene3D" id="1.10.3730.20">
    <property type="match status" value="1"/>
</dbReference>
<dbReference type="InterPro" id="IPR000620">
    <property type="entry name" value="EamA_dom"/>
</dbReference>
<dbReference type="PANTHER" id="PTHR22911">
    <property type="entry name" value="ACYL-MALONYL CONDENSING ENZYME-RELATED"/>
    <property type="match status" value="1"/>
</dbReference>
<dbReference type="PANTHER" id="PTHR22911:SF137">
    <property type="entry name" value="SOLUTE CARRIER FAMILY 35 MEMBER G2-RELATED"/>
    <property type="match status" value="1"/>
</dbReference>
<dbReference type="Pfam" id="PF00892">
    <property type="entry name" value="EamA"/>
    <property type="match status" value="2"/>
</dbReference>
<dbReference type="SUPFAM" id="SSF103481">
    <property type="entry name" value="Multidrug resistance efflux transporter EmrE"/>
    <property type="match status" value="2"/>
</dbReference>
<name>LICB_HAEIN</name>
<organism>
    <name type="scientific">Haemophilus influenzae (strain ATCC 51907 / DSM 11121 / KW20 / Rd)</name>
    <dbReference type="NCBI Taxonomy" id="71421"/>
    <lineage>
        <taxon>Bacteria</taxon>
        <taxon>Pseudomonadati</taxon>
        <taxon>Pseudomonadota</taxon>
        <taxon>Gammaproteobacteria</taxon>
        <taxon>Pasteurellales</taxon>
        <taxon>Pasteurellaceae</taxon>
        <taxon>Haemophilus</taxon>
    </lineage>
</organism>
<protein>
    <recommendedName>
        <fullName>Protein LicB</fullName>
    </recommendedName>
</protein>
<feature type="chain" id="PRO_0000084417" description="Protein LicB">
    <location>
        <begin position="1"/>
        <end position="292"/>
    </location>
</feature>
<feature type="domain" description="EamA 1">
    <location>
        <begin position="70"/>
        <end position="139"/>
    </location>
</feature>
<feature type="domain" description="EamA 2">
    <location>
        <begin position="160"/>
        <end position="286"/>
    </location>
</feature>
<feature type="sequence conflict" description="In Ref. 1; AAA24972." evidence="1" ref="1">
    <original>S</original>
    <variation>L</variation>
    <location>
        <position position="251"/>
    </location>
</feature>
<feature type="sequence conflict" description="In Ref. 1; AAA24972." evidence="1" ref="1">
    <original>IVTLYYKGEQK</original>
    <variation>TLHFITKGNKNECNHFSSRIRQSF</variation>
    <location>
        <begin position="282"/>
        <end position="292"/>
    </location>
</feature>
<comment type="miscellaneous">
    <text>Lipopolysaccharide (LPS) is a glycolipid that is a necessary component and antigenic determinant of the outer membrane and has been shown to be an important factor in the host-parasite interaction in a number of Gram-negative species.</text>
</comment>
<comment type="miscellaneous">
    <text>H.influenzae is able to display an extensive repertoire of different surface configurations through variability of its LPS oligosaccharide.</text>
</comment>